<gene>
    <name type="ORF">VDBG_09414</name>
</gene>
<organism>
    <name type="scientific">Verticillium alfalfae (strain VaMs.102 / ATCC MYA-4576 / FGSC 10136)</name>
    <name type="common">Verticillium wilt of alfalfa</name>
    <name type="synonym">Verticillium albo-atrum</name>
    <dbReference type="NCBI Taxonomy" id="526221"/>
    <lineage>
        <taxon>Eukaryota</taxon>
        <taxon>Fungi</taxon>
        <taxon>Dikarya</taxon>
        <taxon>Ascomycota</taxon>
        <taxon>Pezizomycotina</taxon>
        <taxon>Sordariomycetes</taxon>
        <taxon>Hypocreomycetidae</taxon>
        <taxon>Glomerellales</taxon>
        <taxon>Plectosphaerellaceae</taxon>
        <taxon>Verticillium</taxon>
    </lineage>
</organism>
<comment type="function">
    <text evidence="1">May be involved in vacuolar sorting and osmoregulation.</text>
</comment>
<comment type="cofactor">
    <cofactor evidence="2">
        <name>Zn(2+)</name>
        <dbReference type="ChEBI" id="CHEBI:29105"/>
    </cofactor>
    <text evidence="2">Binds 2 Zn(2+) ions per subunit.</text>
</comment>
<comment type="subcellular location">
    <subcellularLocation>
        <location evidence="1">Vacuole membrane</location>
        <topology evidence="3">Multi-pass membrane protein</topology>
    </subcellularLocation>
</comment>
<comment type="similarity">
    <text evidence="6">Belongs to the peptidase M28 family.</text>
</comment>
<proteinExistence type="inferred from homology"/>
<feature type="chain" id="PRO_0000411748" description="Vacuolar membrane protease">
    <location>
        <begin position="1"/>
        <end position="1020"/>
    </location>
</feature>
<feature type="topological domain" description="Cytoplasmic" evidence="1">
    <location>
        <begin position="1"/>
        <end position="11"/>
    </location>
</feature>
<feature type="transmembrane region" description="Helical; Name=1" evidence="3">
    <location>
        <begin position="12"/>
        <end position="32"/>
    </location>
</feature>
<feature type="topological domain" description="Vacuolar" evidence="1">
    <location>
        <begin position="33"/>
        <end position="410"/>
    </location>
</feature>
<feature type="transmembrane region" description="Helical; Name=2" evidence="3">
    <location>
        <begin position="411"/>
        <end position="431"/>
    </location>
</feature>
<feature type="topological domain" description="Cytoplasmic" evidence="1">
    <location>
        <begin position="432"/>
        <end position="467"/>
    </location>
</feature>
<feature type="transmembrane region" description="Helical; Name=3" evidence="3">
    <location>
        <begin position="468"/>
        <end position="488"/>
    </location>
</feature>
<feature type="topological domain" description="Vacuolar" evidence="1">
    <location>
        <begin position="489"/>
        <end position="491"/>
    </location>
</feature>
<feature type="transmembrane region" description="Helical; Name=4" evidence="3">
    <location>
        <begin position="492"/>
        <end position="512"/>
    </location>
</feature>
<feature type="topological domain" description="Cytoplasmic" evidence="1">
    <location>
        <begin position="513"/>
        <end position="529"/>
    </location>
</feature>
<feature type="transmembrane region" description="Helical; Name=5" evidence="3">
    <location>
        <begin position="530"/>
        <end position="550"/>
    </location>
</feature>
<feature type="topological domain" description="Vacuolar" evidence="1">
    <location>
        <begin position="551"/>
        <end position="561"/>
    </location>
</feature>
<feature type="transmembrane region" description="Helical; Name=6" evidence="3">
    <location>
        <begin position="562"/>
        <end position="582"/>
    </location>
</feature>
<feature type="topological domain" description="Cytoplasmic" evidence="1">
    <location>
        <begin position="583"/>
        <end position="690"/>
    </location>
</feature>
<feature type="transmembrane region" description="Helical; Name=7" evidence="3">
    <location>
        <begin position="691"/>
        <end position="711"/>
    </location>
</feature>
<feature type="topological domain" description="Vacuolar" evidence="1">
    <location>
        <begin position="712"/>
        <end position="724"/>
    </location>
</feature>
<feature type="transmembrane region" description="Helical; Name=8" evidence="3">
    <location>
        <begin position="725"/>
        <end position="745"/>
    </location>
</feature>
<feature type="topological domain" description="Cytoplasmic" evidence="1">
    <location>
        <begin position="746"/>
        <end position="750"/>
    </location>
</feature>
<feature type="transmembrane region" description="Helical; Name=9" evidence="3">
    <location>
        <begin position="751"/>
        <end position="771"/>
    </location>
</feature>
<feature type="topological domain" description="Vacuolar" evidence="1">
    <location>
        <begin position="772"/>
        <end position="1020"/>
    </location>
</feature>
<feature type="region of interest" description="Disordered" evidence="5">
    <location>
        <begin position="609"/>
        <end position="648"/>
    </location>
</feature>
<feature type="compositionally biased region" description="Acidic residues" evidence="5">
    <location>
        <begin position="618"/>
        <end position="631"/>
    </location>
</feature>
<feature type="active site" description="Proton acceptor" evidence="2">
    <location>
        <position position="237"/>
    </location>
</feature>
<feature type="binding site" evidence="2">
    <location>
        <position position="191"/>
    </location>
    <ligand>
        <name>Zn(2+)</name>
        <dbReference type="ChEBI" id="CHEBI:29105"/>
        <label>1</label>
        <note>catalytic</note>
    </ligand>
</feature>
<feature type="binding site" evidence="2">
    <location>
        <position position="203"/>
    </location>
    <ligand>
        <name>Zn(2+)</name>
        <dbReference type="ChEBI" id="CHEBI:29105"/>
        <label>1</label>
        <note>catalytic</note>
    </ligand>
</feature>
<feature type="binding site" evidence="2">
    <location>
        <position position="203"/>
    </location>
    <ligand>
        <name>Zn(2+)</name>
        <dbReference type="ChEBI" id="CHEBI:29105"/>
        <label>2</label>
        <note>catalytic</note>
    </ligand>
</feature>
<feature type="binding site" evidence="2">
    <location>
        <position position="238"/>
    </location>
    <ligand>
        <name>Zn(2+)</name>
        <dbReference type="ChEBI" id="CHEBI:29105"/>
        <label>2</label>
        <note>catalytic</note>
    </ligand>
</feature>
<feature type="binding site" evidence="2">
    <location>
        <position position="263"/>
    </location>
    <ligand>
        <name>Zn(2+)</name>
        <dbReference type="ChEBI" id="CHEBI:29105"/>
        <label>1</label>
        <note>catalytic</note>
    </ligand>
</feature>
<feature type="binding site" evidence="2">
    <location>
        <position position="336"/>
    </location>
    <ligand>
        <name>Zn(2+)</name>
        <dbReference type="ChEBI" id="CHEBI:29105"/>
        <label>2</label>
        <note>catalytic</note>
    </ligand>
</feature>
<feature type="site" description="Transition state stabilizer" evidence="2">
    <location>
        <position position="335"/>
    </location>
</feature>
<feature type="glycosylation site" description="N-linked (GlcNAc...) asparagine" evidence="4">
    <location>
        <position position="50"/>
    </location>
</feature>
<feature type="glycosylation site" description="N-linked (GlcNAc...) asparagine" evidence="4">
    <location>
        <position position="94"/>
    </location>
</feature>
<feature type="glycosylation site" description="N-linked (GlcNAc...) asparagine" evidence="4">
    <location>
        <position position="130"/>
    </location>
</feature>
<feature type="glycosylation site" description="N-linked (GlcNAc...) asparagine" evidence="4">
    <location>
        <position position="851"/>
    </location>
</feature>
<feature type="glycosylation site" description="N-linked (GlcNAc...) asparagine" evidence="4">
    <location>
        <position position="868"/>
    </location>
</feature>
<feature type="glycosylation site" description="N-linked (GlcNAc...) asparagine" evidence="4">
    <location>
        <position position="873"/>
    </location>
</feature>
<keyword id="KW-0325">Glycoprotein</keyword>
<keyword id="KW-0378">Hydrolase</keyword>
<keyword id="KW-0472">Membrane</keyword>
<keyword id="KW-0479">Metal-binding</keyword>
<keyword id="KW-0482">Metalloprotease</keyword>
<keyword id="KW-0645">Protease</keyword>
<keyword id="KW-1185">Reference proteome</keyword>
<keyword id="KW-0812">Transmembrane</keyword>
<keyword id="KW-1133">Transmembrane helix</keyword>
<keyword id="KW-0926">Vacuole</keyword>
<keyword id="KW-0862">Zinc</keyword>
<reference key="1">
    <citation type="journal article" date="2011" name="PLoS Pathog.">
        <title>Comparative genomics yields insights into niche adaptation of plant vascular wilt pathogens.</title>
        <authorList>
            <person name="Klosterman S.J."/>
            <person name="Subbarao K.V."/>
            <person name="Kang S."/>
            <person name="Veronese P."/>
            <person name="Gold S.E."/>
            <person name="Thomma B.P.H.J."/>
            <person name="Chen Z."/>
            <person name="Henrissat B."/>
            <person name="Lee Y.-H."/>
            <person name="Park J."/>
            <person name="Garcia-Pedrajas M.D."/>
            <person name="Barbara D.J."/>
            <person name="Anchieta A."/>
            <person name="de Jonge R."/>
            <person name="Santhanam P."/>
            <person name="Maruthachalam K."/>
            <person name="Atallah Z."/>
            <person name="Amyotte S.G."/>
            <person name="Paz Z."/>
            <person name="Inderbitzin P."/>
            <person name="Hayes R.J."/>
            <person name="Heiman D.I."/>
            <person name="Young S."/>
            <person name="Zeng Q."/>
            <person name="Engels R."/>
            <person name="Galagan J."/>
            <person name="Cuomo C.A."/>
            <person name="Dobinson K.F."/>
            <person name="Ma L.-J."/>
        </authorList>
    </citation>
    <scope>NUCLEOTIDE SEQUENCE [LARGE SCALE GENOMIC DNA]</scope>
    <source>
        <strain>VaMs.102 / ATCC MYA-4576 / FGSC 10136</strain>
    </source>
</reference>
<sequence length="1020" mass="112418">MKCHNPFGFRVGPVTFWTIIIYLALLVPLLWIHETVPPAPSSPTPTPGINLTEAWHDLTTITKHYHPYNSRDNERVGDYILERIAAILDRNDVNWTLEKTGARNVDVTLELSSRSSSAPSVTVFDDNLANVTWATDIGMLGDHTAGVGTYFEGTNKLVYIRGTEDEQGEWWKSGKNDVRVIGKGGVLVNAHYDSVASGYGATDDGMGCVSILQILNYFTTQGRQPKRGLLLLFNNGEEDGLLGAKAFANSPLFSFPTTFVNLEGAGAGGRAVLFRSSDEQVTKAYQKAPHPFGLVVASDGFSMGLVKSQTDFVVWDDIFGQRGLDIAFYRPRPRYHTDQDDTRHASPASLWHMLSNSIAAVKSLSDNTHTFSGQRSDGDRRKVPSGSHASKGVWFDMFGKGFAVFGLRGLFAWSLTLLIVSPLILAILVFILNRHDKLYFFSRKINVHNEGSEDPVSIGGFRGFTRFPIAVGFSGALTLASAFLLTKINPMIVYSSEYAVWGMMLSLFYVSLWMTLKGSSAVRPSALQRGYIHIWLFIVSWGLLIVVAVTEDRLKIASGYPVVFLHSALFLSTVISFLELFGLTKKHDYARRAHDDHQVRDRIGELPHDDALIAPDTPNDEAEDSDGEDSEHEPTETTPLRAGGDSRVRSTFGTAYRSVFTRKSSPDKHKPFENEQPWSGRLPGWTWILQFLLLAPINVILWGQIGLFAVAATQAGGADGGSVLTTYLIIAVLSIVILVPLAPFIHRVHYYVPIILFAAFAGTLIYNLIAFPFSANNRYKIYFVQEIDVSDGSTKVSLTGLDKYVHSVIGELPSTSGKVITCTDSNARSGLVDCSYDGSAVPPLLHGGLENGTVTVTNKRYQHLVSVNITRSNDSKNRATLSINAADSKVCTVIFDQPVSNFAIRGSEGLDSRLGQYPDAGVGSLRLFRRDWTSPWVVDVEWNDQHKVGEVALETDKPVDKDAVEELRKRAGISGTIKCHYSDANVPETIPAFHECLQYSPDWAAFSKADVGLVRPVKRF</sequence>
<dbReference type="EC" id="3.4.-.-" evidence="6"/>
<dbReference type="EMBL" id="DS985228">
    <property type="protein sequence ID" value="EEY23304.1"/>
    <property type="molecule type" value="Genomic_DNA"/>
</dbReference>
<dbReference type="RefSeq" id="XP_003000219.1">
    <property type="nucleotide sequence ID" value="XM_003000173.1"/>
</dbReference>
<dbReference type="SMR" id="C9SXB4"/>
<dbReference type="STRING" id="526221.C9SXB4"/>
<dbReference type="GeneID" id="9527919"/>
<dbReference type="KEGG" id="val:VDBG_09414"/>
<dbReference type="eggNOG" id="KOG2194">
    <property type="taxonomic scope" value="Eukaryota"/>
</dbReference>
<dbReference type="HOGENOM" id="CLU_006412_1_0_1"/>
<dbReference type="OMA" id="FCHTFVN"/>
<dbReference type="OrthoDB" id="76293at2759"/>
<dbReference type="Proteomes" id="UP000008698">
    <property type="component" value="Unassembled WGS sequence"/>
</dbReference>
<dbReference type="GO" id="GO:0005774">
    <property type="term" value="C:vacuolar membrane"/>
    <property type="evidence" value="ECO:0007669"/>
    <property type="project" value="UniProtKB-SubCell"/>
</dbReference>
<dbReference type="GO" id="GO:0046872">
    <property type="term" value="F:metal ion binding"/>
    <property type="evidence" value="ECO:0007669"/>
    <property type="project" value="UniProtKB-KW"/>
</dbReference>
<dbReference type="GO" id="GO:0008235">
    <property type="term" value="F:metalloexopeptidase activity"/>
    <property type="evidence" value="ECO:0007669"/>
    <property type="project" value="InterPro"/>
</dbReference>
<dbReference type="GO" id="GO:0006508">
    <property type="term" value="P:proteolysis"/>
    <property type="evidence" value="ECO:0007669"/>
    <property type="project" value="UniProtKB-KW"/>
</dbReference>
<dbReference type="CDD" id="cd03875">
    <property type="entry name" value="M28_Fxna_like"/>
    <property type="match status" value="1"/>
</dbReference>
<dbReference type="FunFam" id="3.40.630.10:FF:000057">
    <property type="entry name" value="Vacuolar membrane protease"/>
    <property type="match status" value="1"/>
</dbReference>
<dbReference type="Gene3D" id="3.40.630.10">
    <property type="entry name" value="Zn peptidases"/>
    <property type="match status" value="1"/>
</dbReference>
<dbReference type="InterPro" id="IPR048024">
    <property type="entry name" value="Fxna-like_M28_dom"/>
</dbReference>
<dbReference type="InterPro" id="IPR045175">
    <property type="entry name" value="M28_fam"/>
</dbReference>
<dbReference type="InterPro" id="IPR007484">
    <property type="entry name" value="Peptidase_M28"/>
</dbReference>
<dbReference type="InterPro" id="IPR053975">
    <property type="entry name" value="PFF1_C"/>
</dbReference>
<dbReference type="InterPro" id="IPR053976">
    <property type="entry name" value="PFF1_TM"/>
</dbReference>
<dbReference type="PANTHER" id="PTHR12147">
    <property type="entry name" value="METALLOPEPTIDASE M28 FAMILY MEMBER"/>
    <property type="match status" value="1"/>
</dbReference>
<dbReference type="PANTHER" id="PTHR12147:SF58">
    <property type="entry name" value="VACUOLAR MEMBRANE PROTEASE"/>
    <property type="match status" value="1"/>
</dbReference>
<dbReference type="Pfam" id="PF04389">
    <property type="entry name" value="Peptidase_M28"/>
    <property type="match status" value="1"/>
</dbReference>
<dbReference type="Pfam" id="PF22250">
    <property type="entry name" value="PFF1_C"/>
    <property type="match status" value="1"/>
</dbReference>
<dbReference type="Pfam" id="PF22251">
    <property type="entry name" value="PFF1_TM"/>
    <property type="match status" value="1"/>
</dbReference>
<dbReference type="SUPFAM" id="SSF53187">
    <property type="entry name" value="Zn-dependent exopeptidases"/>
    <property type="match status" value="1"/>
</dbReference>
<protein>
    <recommendedName>
        <fullName evidence="1">Vacuolar membrane protease</fullName>
        <ecNumber evidence="6">3.4.-.-</ecNumber>
    </recommendedName>
    <alternativeName>
        <fullName evidence="1">FXNA-related family protease 1</fullName>
    </alternativeName>
</protein>
<evidence type="ECO:0000250" key="1">
    <source>
        <dbReference type="UniProtKB" id="P38244"/>
    </source>
</evidence>
<evidence type="ECO:0000250" key="2">
    <source>
        <dbReference type="UniProtKB" id="P80561"/>
    </source>
</evidence>
<evidence type="ECO:0000255" key="3"/>
<evidence type="ECO:0000255" key="4">
    <source>
        <dbReference type="PROSITE-ProRule" id="PRU00498"/>
    </source>
</evidence>
<evidence type="ECO:0000256" key="5">
    <source>
        <dbReference type="SAM" id="MobiDB-lite"/>
    </source>
</evidence>
<evidence type="ECO:0000305" key="6"/>
<accession>C9SXB4</accession>
<name>PFF1_VERA1</name>